<reference key="1">
    <citation type="journal article" date="1996" name="Genomics">
        <title>Characterization of novel secreted and membrane proteins isolated by the signal sequence trap method.</title>
        <authorList>
            <person name="Shirozu M."/>
            <person name="Tada H."/>
            <person name="Tashiro K."/>
            <person name="Nakamura T."/>
            <person name="Lopez N.D."/>
            <person name="Nazarea M."/>
            <person name="Hamada T."/>
            <person name="Sato T."/>
            <person name="Nakano T."/>
            <person name="Honjo T."/>
        </authorList>
    </citation>
    <scope>NUCLEOTIDE SEQUENCE [MRNA] (ISOFORM 1)</scope>
    <scope>TISSUE SPECIFICITY</scope>
</reference>
<reference key="2">
    <citation type="journal article" date="2005" name="Science">
        <title>The transcriptional landscape of the mammalian genome.</title>
        <authorList>
            <person name="Carninci P."/>
            <person name="Kasukawa T."/>
            <person name="Katayama S."/>
            <person name="Gough J."/>
            <person name="Frith M.C."/>
            <person name="Maeda N."/>
            <person name="Oyama R."/>
            <person name="Ravasi T."/>
            <person name="Lenhard B."/>
            <person name="Wells C."/>
            <person name="Kodzius R."/>
            <person name="Shimokawa K."/>
            <person name="Bajic V.B."/>
            <person name="Brenner S.E."/>
            <person name="Batalov S."/>
            <person name="Forrest A.R."/>
            <person name="Zavolan M."/>
            <person name="Davis M.J."/>
            <person name="Wilming L.G."/>
            <person name="Aidinis V."/>
            <person name="Allen J.E."/>
            <person name="Ambesi-Impiombato A."/>
            <person name="Apweiler R."/>
            <person name="Aturaliya R.N."/>
            <person name="Bailey T.L."/>
            <person name="Bansal M."/>
            <person name="Baxter L."/>
            <person name="Beisel K.W."/>
            <person name="Bersano T."/>
            <person name="Bono H."/>
            <person name="Chalk A.M."/>
            <person name="Chiu K.P."/>
            <person name="Choudhary V."/>
            <person name="Christoffels A."/>
            <person name="Clutterbuck D.R."/>
            <person name="Crowe M.L."/>
            <person name="Dalla E."/>
            <person name="Dalrymple B.P."/>
            <person name="de Bono B."/>
            <person name="Della Gatta G."/>
            <person name="di Bernardo D."/>
            <person name="Down T."/>
            <person name="Engstrom P."/>
            <person name="Fagiolini M."/>
            <person name="Faulkner G."/>
            <person name="Fletcher C.F."/>
            <person name="Fukushima T."/>
            <person name="Furuno M."/>
            <person name="Futaki S."/>
            <person name="Gariboldi M."/>
            <person name="Georgii-Hemming P."/>
            <person name="Gingeras T.R."/>
            <person name="Gojobori T."/>
            <person name="Green R.E."/>
            <person name="Gustincich S."/>
            <person name="Harbers M."/>
            <person name="Hayashi Y."/>
            <person name="Hensch T.K."/>
            <person name="Hirokawa N."/>
            <person name="Hill D."/>
            <person name="Huminiecki L."/>
            <person name="Iacono M."/>
            <person name="Ikeo K."/>
            <person name="Iwama A."/>
            <person name="Ishikawa T."/>
            <person name="Jakt M."/>
            <person name="Kanapin A."/>
            <person name="Katoh M."/>
            <person name="Kawasawa Y."/>
            <person name="Kelso J."/>
            <person name="Kitamura H."/>
            <person name="Kitano H."/>
            <person name="Kollias G."/>
            <person name="Krishnan S.P."/>
            <person name="Kruger A."/>
            <person name="Kummerfeld S.K."/>
            <person name="Kurochkin I.V."/>
            <person name="Lareau L.F."/>
            <person name="Lazarevic D."/>
            <person name="Lipovich L."/>
            <person name="Liu J."/>
            <person name="Liuni S."/>
            <person name="McWilliam S."/>
            <person name="Madan Babu M."/>
            <person name="Madera M."/>
            <person name="Marchionni L."/>
            <person name="Matsuda H."/>
            <person name="Matsuzawa S."/>
            <person name="Miki H."/>
            <person name="Mignone F."/>
            <person name="Miyake S."/>
            <person name="Morris K."/>
            <person name="Mottagui-Tabar S."/>
            <person name="Mulder N."/>
            <person name="Nakano N."/>
            <person name="Nakauchi H."/>
            <person name="Ng P."/>
            <person name="Nilsson R."/>
            <person name="Nishiguchi S."/>
            <person name="Nishikawa S."/>
            <person name="Nori F."/>
            <person name="Ohara O."/>
            <person name="Okazaki Y."/>
            <person name="Orlando V."/>
            <person name="Pang K.C."/>
            <person name="Pavan W.J."/>
            <person name="Pavesi G."/>
            <person name="Pesole G."/>
            <person name="Petrovsky N."/>
            <person name="Piazza S."/>
            <person name="Reed J."/>
            <person name="Reid J.F."/>
            <person name="Ring B.Z."/>
            <person name="Ringwald M."/>
            <person name="Rost B."/>
            <person name="Ruan Y."/>
            <person name="Salzberg S.L."/>
            <person name="Sandelin A."/>
            <person name="Schneider C."/>
            <person name="Schoenbach C."/>
            <person name="Sekiguchi K."/>
            <person name="Semple C.A."/>
            <person name="Seno S."/>
            <person name="Sessa L."/>
            <person name="Sheng Y."/>
            <person name="Shibata Y."/>
            <person name="Shimada H."/>
            <person name="Shimada K."/>
            <person name="Silva D."/>
            <person name="Sinclair B."/>
            <person name="Sperling S."/>
            <person name="Stupka E."/>
            <person name="Sugiura K."/>
            <person name="Sultana R."/>
            <person name="Takenaka Y."/>
            <person name="Taki K."/>
            <person name="Tammoja K."/>
            <person name="Tan S.L."/>
            <person name="Tang S."/>
            <person name="Taylor M.S."/>
            <person name="Tegner J."/>
            <person name="Teichmann S.A."/>
            <person name="Ueda H.R."/>
            <person name="van Nimwegen E."/>
            <person name="Verardo R."/>
            <person name="Wei C.L."/>
            <person name="Yagi K."/>
            <person name="Yamanishi H."/>
            <person name="Zabarovsky E."/>
            <person name="Zhu S."/>
            <person name="Zimmer A."/>
            <person name="Hide W."/>
            <person name="Bult C."/>
            <person name="Grimmond S.M."/>
            <person name="Teasdale R.D."/>
            <person name="Liu E.T."/>
            <person name="Brusic V."/>
            <person name="Quackenbush J."/>
            <person name="Wahlestedt C."/>
            <person name="Mattick J.S."/>
            <person name="Hume D.A."/>
            <person name="Kai C."/>
            <person name="Sasaki D."/>
            <person name="Tomaru Y."/>
            <person name="Fukuda S."/>
            <person name="Kanamori-Katayama M."/>
            <person name="Suzuki M."/>
            <person name="Aoki J."/>
            <person name="Arakawa T."/>
            <person name="Iida J."/>
            <person name="Imamura K."/>
            <person name="Itoh M."/>
            <person name="Kato T."/>
            <person name="Kawaji H."/>
            <person name="Kawagashira N."/>
            <person name="Kawashima T."/>
            <person name="Kojima M."/>
            <person name="Kondo S."/>
            <person name="Konno H."/>
            <person name="Nakano K."/>
            <person name="Ninomiya N."/>
            <person name="Nishio T."/>
            <person name="Okada M."/>
            <person name="Plessy C."/>
            <person name="Shibata K."/>
            <person name="Shiraki T."/>
            <person name="Suzuki S."/>
            <person name="Tagami M."/>
            <person name="Waki K."/>
            <person name="Watahiki A."/>
            <person name="Okamura-Oho Y."/>
            <person name="Suzuki H."/>
            <person name="Kawai J."/>
            <person name="Hayashizaki Y."/>
        </authorList>
    </citation>
    <scope>NUCLEOTIDE SEQUENCE [LARGE SCALE MRNA] (ISOFORMS 1; 3 AND 4)</scope>
    <source>
        <strain>NOD</strain>
        <tissue>Brain</tissue>
        <tissue>Testis</tissue>
        <tissue>Thymus</tissue>
    </source>
</reference>
<reference key="3">
    <citation type="journal article" date="2009" name="PLoS Biol.">
        <title>Lineage-specific biology revealed by a finished genome assembly of the mouse.</title>
        <authorList>
            <person name="Church D.M."/>
            <person name="Goodstadt L."/>
            <person name="Hillier L.W."/>
            <person name="Zody M.C."/>
            <person name="Goldstein S."/>
            <person name="She X."/>
            <person name="Bult C.J."/>
            <person name="Agarwala R."/>
            <person name="Cherry J.L."/>
            <person name="DiCuccio M."/>
            <person name="Hlavina W."/>
            <person name="Kapustin Y."/>
            <person name="Meric P."/>
            <person name="Maglott D."/>
            <person name="Birtle Z."/>
            <person name="Marques A.C."/>
            <person name="Graves T."/>
            <person name="Zhou S."/>
            <person name="Teague B."/>
            <person name="Potamousis K."/>
            <person name="Churas C."/>
            <person name="Place M."/>
            <person name="Herschleb J."/>
            <person name="Runnheim R."/>
            <person name="Forrest D."/>
            <person name="Amos-Landgraf J."/>
            <person name="Schwartz D.C."/>
            <person name="Cheng Z."/>
            <person name="Lindblad-Toh K."/>
            <person name="Eichler E.E."/>
            <person name="Ponting C.P."/>
        </authorList>
    </citation>
    <scope>NUCLEOTIDE SEQUENCE [LARGE SCALE GENOMIC DNA]</scope>
    <source>
        <strain>C57BL/6J</strain>
    </source>
</reference>
<reference key="4">
    <citation type="submission" date="2007-04" db="UniProtKB">
        <authorList>
            <person name="Lubec G."/>
            <person name="Kang S.U."/>
        </authorList>
    </citation>
    <scope>PROTEIN SEQUENCE OF 150-159 AND 260-271</scope>
    <scope>IDENTIFICATION BY MASS SPECTROMETRY</scope>
    <source>
        <strain>C57BL/6J</strain>
        <tissue>Brain</tissue>
    </source>
</reference>
<reference key="5">
    <citation type="journal article" date="1999" name="Biomed. Res.">
        <title>Isoform specific expression of the SDR-1 protein, alpha and beta in subregions of adult rodent brain.</title>
        <authorList>
            <person name="Lopez N.D."/>
            <person name="Kinoshita A."/>
            <person name="Taniwaki M."/>
            <person name="Tada H."/>
            <person name="Shirozu M."/>
            <person name="Nakano T."/>
            <person name="Tashiro K."/>
            <person name="Honjo T."/>
        </authorList>
    </citation>
    <scope>ALTERNATIVE SPLICING (ISOFORMS 1 AND 2)</scope>
    <scope>TISSUE SPECIFICITY</scope>
</reference>
<reference key="6">
    <citation type="journal article" date="2006" name="J. Proteome Res.">
        <title>Proteome-wide characterization of N-glycosylation events by diagonal chromatography.</title>
        <authorList>
            <person name="Ghesquiere B."/>
            <person name="Van Damme J."/>
            <person name="Martens L."/>
            <person name="Vandekerckhove J."/>
            <person name="Gevaert K."/>
        </authorList>
    </citation>
    <scope>GLYCOSYLATION [LARGE SCALE ANALYSIS] AT ASN-283</scope>
    <source>
        <strain>C57BL/6J</strain>
        <tissue>Plasma</tissue>
    </source>
</reference>
<reference key="7">
    <citation type="journal article" date="2009" name="Mol. Cell. Proteomics">
        <title>The mouse C2C12 myoblast cell surface N-linked glycoproteome: identification, glycosite occupancy, and membrane orientation.</title>
        <authorList>
            <person name="Gundry R.L."/>
            <person name="Raginski K."/>
            <person name="Tarasova Y."/>
            <person name="Tchernyshyov I."/>
            <person name="Bausch-Fluck D."/>
            <person name="Elliott S.T."/>
            <person name="Boheler K.R."/>
            <person name="Van Eyk J.E."/>
            <person name="Wollscheid B."/>
        </authorList>
    </citation>
    <scope>GLYCOSYLATION [LARGE SCALE ANALYSIS] AT ASN-196; ASN-228 AND ASN-283</scope>
    <source>
        <tissue>Myoblast</tissue>
    </source>
</reference>
<reference key="8">
    <citation type="journal article" date="2009" name="Nat. Biotechnol.">
        <title>Mass-spectrometric identification and relative quantification of N-linked cell surface glycoproteins.</title>
        <authorList>
            <person name="Wollscheid B."/>
            <person name="Bausch-Fluck D."/>
            <person name="Henderson C."/>
            <person name="O'Brien R."/>
            <person name="Bibel M."/>
            <person name="Schiess R."/>
            <person name="Aebersold R."/>
            <person name="Watts J.D."/>
        </authorList>
    </citation>
    <scope>GLYCOSYLATION [LARGE SCALE ANALYSIS] AT ASN-228 AND ASN-283</scope>
</reference>
<reference key="9">
    <citation type="journal article" date="2010" name="Cell">
        <title>A tissue-specific atlas of mouse protein phosphorylation and expression.</title>
        <authorList>
            <person name="Huttlin E.L."/>
            <person name="Jedrychowski M.P."/>
            <person name="Elias J.E."/>
            <person name="Goswami T."/>
            <person name="Rad R."/>
            <person name="Beausoleil S.A."/>
            <person name="Villen J."/>
            <person name="Haas W."/>
            <person name="Sowa M.E."/>
            <person name="Gygi S.P."/>
        </authorList>
    </citation>
    <scope>IDENTIFICATION BY MASS SPECTROMETRY [LARGE SCALE ANALYSIS]</scope>
    <source>
        <tissue>Brain</tissue>
        <tissue>Kidney</tissue>
        <tissue>Lung</tissue>
        <tissue>Spleen</tissue>
        <tissue>Testis</tissue>
    </source>
</reference>
<reference key="10">
    <citation type="journal article" date="2017" name="Sci. Rep.">
        <title>A complex of Neuroplastin and Plasma Membrane Ca2+ ATPase controls T cell activation.</title>
        <authorList>
            <person name="Korthals M."/>
            <person name="Langnaese K."/>
            <person name="Smalla K.H."/>
            <person name="Kaehne T."/>
            <person name="Herrera-Molina R."/>
            <person name="Handschuh J."/>
            <person name="Lehmann A.C."/>
            <person name="Mamula D."/>
            <person name="Naumann M."/>
            <person name="Seidenbecher C."/>
            <person name="Zuschratter W."/>
            <person name="Tedford K."/>
            <person name="Gundelfinger E.D."/>
            <person name="Montag D."/>
            <person name="Fischer K.D."/>
            <person name="Thomas U."/>
        </authorList>
    </citation>
    <scope>INTERACTION WITH ATP2B1</scope>
</reference>
<proteinExistence type="evidence at protein level"/>
<protein>
    <recommendedName>
        <fullName>Neuroplastin</fullName>
    </recommendedName>
    <alternativeName>
        <fullName>Stromal cell-derived receptor 1</fullName>
        <shortName>SDR-1</shortName>
    </alternativeName>
</protein>
<evidence type="ECO:0000250" key="1"/>
<evidence type="ECO:0000250" key="2">
    <source>
        <dbReference type="UniProtKB" id="P97546"/>
    </source>
</evidence>
<evidence type="ECO:0000250" key="3">
    <source>
        <dbReference type="UniProtKB" id="Q9Y639"/>
    </source>
</evidence>
<evidence type="ECO:0000255" key="4"/>
<evidence type="ECO:0000255" key="5">
    <source>
        <dbReference type="PROSITE-ProRule" id="PRU00114"/>
    </source>
</evidence>
<evidence type="ECO:0000256" key="6">
    <source>
        <dbReference type="SAM" id="MobiDB-lite"/>
    </source>
</evidence>
<evidence type="ECO:0000269" key="7">
    <source>
    </source>
</evidence>
<evidence type="ECO:0000269" key="8">
    <source>
    </source>
</evidence>
<evidence type="ECO:0000269" key="9">
    <source>
    </source>
</evidence>
<evidence type="ECO:0000269" key="10">
    <source>
    </source>
</evidence>
<evidence type="ECO:0000269" key="11">
    <source>
    </source>
</evidence>
<evidence type="ECO:0000269" key="12">
    <source ref="5"/>
</evidence>
<evidence type="ECO:0000303" key="13">
    <source>
    </source>
</evidence>
<evidence type="ECO:0000303" key="14">
    <source>
    </source>
</evidence>
<evidence type="ECO:0000305" key="15"/>
<name>NPTN_MOUSE</name>
<feature type="signal peptide" evidence="1">
    <location>
        <begin position="1"/>
        <end position="28"/>
    </location>
</feature>
<feature type="chain" id="PRO_0000394471" description="Neuroplastin">
    <location>
        <begin position="29"/>
        <end position="397"/>
    </location>
</feature>
<feature type="topological domain" description="Extracellular" evidence="4">
    <location>
        <begin position="29"/>
        <end position="338"/>
    </location>
</feature>
<feature type="transmembrane region" description="Helical" evidence="3">
    <location>
        <begin position="339"/>
        <end position="359"/>
    </location>
</feature>
<feature type="topological domain" description="Cytoplasmic" evidence="4">
    <location>
        <begin position="360"/>
        <end position="397"/>
    </location>
</feature>
<feature type="domain" description="Ig-like 1">
    <location>
        <begin position="29"/>
        <end position="134"/>
    </location>
</feature>
<feature type="domain" description="Ig-like 2">
    <location>
        <begin position="148"/>
        <end position="234"/>
    </location>
</feature>
<feature type="domain" description="Ig-like 3">
    <location>
        <begin position="237"/>
        <end position="327"/>
    </location>
</feature>
<feature type="region of interest" description="Narpin; mediates binding with FGFR1 and has antidepressant-like activity" evidence="1">
    <location>
        <begin position="149"/>
        <end position="161"/>
    </location>
</feature>
<feature type="region of interest" description="Disordered" evidence="6">
    <location>
        <begin position="364"/>
        <end position="397"/>
    </location>
</feature>
<feature type="glycosylation site" description="N-linked (GlcNAc...) asparagine" evidence="4">
    <location>
        <position position="170"/>
    </location>
</feature>
<feature type="glycosylation site" description="N-linked (GlcNAc...) asparagine" evidence="9">
    <location>
        <position position="196"/>
    </location>
</feature>
<feature type="glycosylation site" description="N-linked (GlcNAc...) asparagine" evidence="8 9">
    <location>
        <position position="228"/>
    </location>
</feature>
<feature type="glycosylation site" description="N-linked (GlcNAc...) asparagine" evidence="7 8 9">
    <location>
        <position position="283"/>
    </location>
</feature>
<feature type="glycosylation site" description="N-linked (GlcNAc...) asparagine" evidence="4">
    <location>
        <position position="295"/>
    </location>
</feature>
<feature type="glycosylation site" description="N-linked (GlcNAc...) asparagine" evidence="4">
    <location>
        <position position="316"/>
    </location>
</feature>
<feature type="disulfide bond" evidence="5">
    <location>
        <begin position="52"/>
        <end position="116"/>
    </location>
</feature>
<feature type="disulfide bond" evidence="5">
    <location>
        <begin position="169"/>
        <end position="217"/>
    </location>
</feature>
<feature type="disulfide bond" evidence="5">
    <location>
        <begin position="258"/>
        <end position="315"/>
    </location>
</feature>
<feature type="splice variant" id="VSP_039254" description="In isoform 4." evidence="13">
    <location>
        <begin position="1"/>
        <end position="226"/>
    </location>
</feature>
<feature type="splice variant" id="VSP_039255" description="In isoform 1 and isoform 3." evidence="13 14">
    <original>AGFVKSPMSETKLTGDAFELYCDVVGSPTPEIQWWYAEVNRAESFRQLWDGARKRRVTVNTAYGSNGVSVLRITRLTLEDSGTYECRASNDPKRNDLRQNPSITWIRAQATISVLQK</original>
    <variation>E</variation>
    <location>
        <begin position="31"/>
        <end position="147"/>
    </location>
</feature>
<feature type="splice variant" id="VSP_039256" description="In isoform 4." evidence="13">
    <original>ANATIEVKA</original>
    <variation>MSVVDLPNS</variation>
    <location>
        <begin position="227"/>
        <end position="235"/>
    </location>
</feature>
<feature type="splice variant" id="VSP_039257" description="In isoform 3." evidence="13">
    <location>
        <begin position="371"/>
        <end position="374"/>
    </location>
</feature>
<feature type="sequence conflict" description="In Ref. 2; BAE32261." evidence="15" ref="2">
    <original>S</original>
    <variation>C</variation>
    <location>
        <position position="245"/>
    </location>
</feature>
<feature type="sequence conflict" description="In Ref. 2; BAC35855." evidence="15" ref="2">
    <original>E</original>
    <variation>R</variation>
    <location>
        <position position="246"/>
    </location>
</feature>
<feature type="sequence conflict" description="In Ref. 1; BAA09054." evidence="15" ref="1">
    <original>H</original>
    <variation>P</variation>
    <location>
        <position position="386"/>
    </location>
</feature>
<accession>P97300</accession>
<accession>Q3U519</accession>
<accession>Q8C637</accession>
<accession>Q8C6H8</accession>
<organism>
    <name type="scientific">Mus musculus</name>
    <name type="common">Mouse</name>
    <dbReference type="NCBI Taxonomy" id="10090"/>
    <lineage>
        <taxon>Eukaryota</taxon>
        <taxon>Metazoa</taxon>
        <taxon>Chordata</taxon>
        <taxon>Craniata</taxon>
        <taxon>Vertebrata</taxon>
        <taxon>Euteleostomi</taxon>
        <taxon>Mammalia</taxon>
        <taxon>Eutheria</taxon>
        <taxon>Euarchontoglires</taxon>
        <taxon>Glires</taxon>
        <taxon>Rodentia</taxon>
        <taxon>Myomorpha</taxon>
        <taxon>Muroidea</taxon>
        <taxon>Muridae</taxon>
        <taxon>Murinae</taxon>
        <taxon>Mus</taxon>
        <taxon>Mus</taxon>
    </lineage>
</organism>
<keyword id="KW-0025">Alternative splicing</keyword>
<keyword id="KW-0130">Cell adhesion</keyword>
<keyword id="KW-1003">Cell membrane</keyword>
<keyword id="KW-0903">Direct protein sequencing</keyword>
<keyword id="KW-1015">Disulfide bond</keyword>
<keyword id="KW-0325">Glycoprotein</keyword>
<keyword id="KW-0393">Immunoglobulin domain</keyword>
<keyword id="KW-0472">Membrane</keyword>
<keyword id="KW-0524">Neurogenesis</keyword>
<keyword id="KW-1185">Reference proteome</keyword>
<keyword id="KW-0677">Repeat</keyword>
<keyword id="KW-0732">Signal</keyword>
<keyword id="KW-0770">Synapse</keyword>
<keyword id="KW-0812">Transmembrane</keyword>
<keyword id="KW-1133">Transmembrane helix</keyword>
<gene>
    <name type="primary">Nptn</name>
    <name type="synonym">Sdfr1</name>
    <name type="synonym">Sdr1</name>
</gene>
<comment type="function">
    <text evidence="2 3">Probable homophilic and heterophilic cell adhesion molecule involved in long term potentiation at hippocampal excitatory synapses through activation of p38MAPK. May also regulate neurite outgrowth by activating the FGFR1 signaling pathway. May play a role in synaptic plasticity (By similarity). Also acts as a chaperone for ATP2B1; stabilizes ATP2B1 and increases its ATPase activity. Promotes localization of XKR8 at the cell membrane (By similarity).</text>
</comment>
<comment type="subunit">
    <text evidence="3 10">Interacts with ATP2B1; this interaction stabilizes ATP2B1 and increases ATPase activity; this interaction controls T cell calcium homeostasis following T cell activation (PubMed:28827723). Interacts with XKR8; promoting its localization at the cell membrane (By similarity).</text>
</comment>
<comment type="subcellular location">
    <subcellularLocation>
        <location evidence="2">Cell membrane</location>
        <topology evidence="2">Single-pass type I membrane protein</topology>
    </subcellularLocation>
</comment>
<comment type="subcellular location">
    <molecule>Isoform 2</molecule>
    <subcellularLocation>
        <location evidence="2">Postsynaptic density</location>
    </subcellularLocation>
</comment>
<comment type="alternative products">
    <event type="alternative splicing"/>
    <isoform>
        <id>P97300-2</id>
        <name>2</name>
        <name>SDR-1beta</name>
        <sequence type="displayed"/>
    </isoform>
    <isoform>
        <id>P97300-1</id>
        <name>1</name>
        <name>SDR-1alpha</name>
        <sequence type="described" ref="VSP_039255"/>
    </isoform>
    <isoform>
        <id>P97300-3</id>
        <name>3</name>
        <sequence type="described" ref="VSP_039255 VSP_039257"/>
    </isoform>
    <isoform>
        <id>P97300-4</id>
        <name>4</name>
        <sequence type="described" ref="VSP_039254 VSP_039256"/>
    </isoform>
</comment>
<comment type="tissue specificity">
    <text evidence="11 12">Isoform 1 and isoform 2 are widely expressed with variable levels in brain. Isoform 1 is expressed in cerebellum and midbrain. Isoform 1 and isoform 2 are expressed in cerebral cortex, hippocampus and striatum. Isoform 2 is more abundant in the cerebral cortex than isoform 1.</text>
</comment>
<comment type="domain">
    <text evidence="1">Some isoforms lack the first Ig-like domain which may confer homophilic adhesion activity. However, they can bind and activate FGFR1 (By similarity).</text>
</comment>
<comment type="PTM">
    <text evidence="1">N-glycosylated.</text>
</comment>
<dbReference type="EMBL" id="D50463">
    <property type="protein sequence ID" value="BAA09054.1"/>
    <property type="molecule type" value="mRNA"/>
</dbReference>
<dbReference type="EMBL" id="AK075610">
    <property type="protein sequence ID" value="BAC35855.1"/>
    <property type="molecule type" value="mRNA"/>
</dbReference>
<dbReference type="EMBL" id="AK076624">
    <property type="protein sequence ID" value="BAC36420.1"/>
    <property type="molecule type" value="mRNA"/>
</dbReference>
<dbReference type="EMBL" id="AK153930">
    <property type="protein sequence ID" value="BAE32261.1"/>
    <property type="molecule type" value="mRNA"/>
</dbReference>
<dbReference type="EMBL" id="CT030640">
    <property type="status" value="NOT_ANNOTATED_CDS"/>
    <property type="molecule type" value="Genomic_DNA"/>
</dbReference>
<dbReference type="CCDS" id="CCDS23245.1">
    <molecule id="P97300-1"/>
</dbReference>
<dbReference type="CCDS" id="CCDS81009.1">
    <molecule id="P97300-3"/>
</dbReference>
<dbReference type="RefSeq" id="NP_001280602.1">
    <molecule id="P97300-3"/>
    <property type="nucleotide sequence ID" value="NM_001293673.2"/>
</dbReference>
<dbReference type="RefSeq" id="NP_001392991.1">
    <molecule id="P97300-2"/>
    <property type="nucleotide sequence ID" value="NM_001406062.1"/>
</dbReference>
<dbReference type="RefSeq" id="NP_033171.2">
    <molecule id="P97300-1"/>
    <property type="nucleotide sequence ID" value="NM_009145.3"/>
</dbReference>
<dbReference type="RefSeq" id="XP_006510945.1">
    <property type="nucleotide sequence ID" value="XM_006510882.1"/>
</dbReference>
<dbReference type="RefSeq" id="XP_006510946.1">
    <molecule id="P97300-2"/>
    <property type="nucleotide sequence ID" value="XM_006510883.3"/>
</dbReference>
<dbReference type="RefSeq" id="XP_030100008.1">
    <molecule id="P97300-1"/>
    <property type="nucleotide sequence ID" value="XM_030244148.2"/>
</dbReference>
<dbReference type="SMR" id="P97300"/>
<dbReference type="BioGRID" id="203143">
    <property type="interactions" value="29"/>
</dbReference>
<dbReference type="FunCoup" id="P97300">
    <property type="interactions" value="773"/>
</dbReference>
<dbReference type="IntAct" id="P97300">
    <property type="interactions" value="4"/>
</dbReference>
<dbReference type="MINT" id="P97300"/>
<dbReference type="GlyConnect" id="2439">
    <molecule id="P97300-3"/>
    <property type="glycosylation" value="6 N-Linked glycans (1 site)"/>
</dbReference>
<dbReference type="GlyConnect" id="2557">
    <property type="glycosylation" value="21 N-Linked glycans (4 sites)"/>
</dbReference>
<dbReference type="GlyCosmos" id="P97300">
    <property type="glycosylation" value="6 sites, 20 glycans"/>
</dbReference>
<dbReference type="GlyGen" id="P97300">
    <property type="glycosylation" value="9 sites, 26 N-linked glycans (7 sites), 1 O-linked glycan (1 site)"/>
</dbReference>
<dbReference type="iPTMnet" id="P97300"/>
<dbReference type="PhosphoSitePlus" id="P97300"/>
<dbReference type="SwissPalm" id="P97300"/>
<dbReference type="jPOST" id="P97300"/>
<dbReference type="PeptideAtlas" id="P97300"/>
<dbReference type="ProteomicsDB" id="293958">
    <molecule id="P97300-2"/>
</dbReference>
<dbReference type="ProteomicsDB" id="293959">
    <molecule id="P97300-1"/>
</dbReference>
<dbReference type="ProteomicsDB" id="293960">
    <molecule id="P97300-3"/>
</dbReference>
<dbReference type="ProteomicsDB" id="293961">
    <molecule id="P97300-4"/>
</dbReference>
<dbReference type="Pumba" id="P97300"/>
<dbReference type="Antibodypedia" id="26797">
    <property type="antibodies" value="345 antibodies from 27 providers"/>
</dbReference>
<dbReference type="Ensembl" id="ENSMUST00000085651.12">
    <molecule id="P97300-1"/>
    <property type="protein sequence ID" value="ENSMUSP00000082793.6"/>
    <property type="gene ID" value="ENSMUSG00000032336.19"/>
</dbReference>
<dbReference type="Ensembl" id="ENSMUST00000176250.2">
    <molecule id="P97300-4"/>
    <property type="protein sequence ID" value="ENSMUSP00000135250.2"/>
    <property type="gene ID" value="ENSMUSG00000032336.19"/>
</dbReference>
<dbReference type="Ensembl" id="ENSMUST00000176557.8">
    <molecule id="P97300-3"/>
    <property type="protein sequence ID" value="ENSMUSP00000135541.2"/>
    <property type="gene ID" value="ENSMUSG00000032336.19"/>
</dbReference>
<dbReference type="Ensembl" id="ENSMUST00000176916.8">
    <molecule id="P97300-4"/>
    <property type="protein sequence ID" value="ENSMUSP00000134977.2"/>
    <property type="gene ID" value="ENSMUSG00000032336.19"/>
</dbReference>
<dbReference type="Ensembl" id="ENSMUST00000177292.8">
    <molecule id="P97300-2"/>
    <property type="protein sequence ID" value="ENSMUSP00000135199.2"/>
    <property type="gene ID" value="ENSMUSG00000032336.19"/>
</dbReference>
<dbReference type="GeneID" id="20320"/>
<dbReference type="KEGG" id="mmu:20320"/>
<dbReference type="UCSC" id="uc009pxd.1">
    <molecule id="P97300-1"/>
    <property type="organism name" value="mouse"/>
</dbReference>
<dbReference type="UCSC" id="uc009pxe.1">
    <molecule id="P97300-3"/>
    <property type="organism name" value="mouse"/>
</dbReference>
<dbReference type="UCSC" id="uc009pxf.1">
    <molecule id="P97300-4"/>
    <property type="organism name" value="mouse"/>
</dbReference>
<dbReference type="AGR" id="MGI:108077"/>
<dbReference type="CTD" id="27020"/>
<dbReference type="MGI" id="MGI:108077">
    <property type="gene designation" value="Nptn"/>
</dbReference>
<dbReference type="VEuPathDB" id="HostDB:ENSMUSG00000032336"/>
<dbReference type="eggNOG" id="ENOG502SMFN">
    <property type="taxonomic scope" value="Eukaryota"/>
</dbReference>
<dbReference type="GeneTree" id="ENSGT00940000156195"/>
<dbReference type="HOGENOM" id="CLU_058449_0_0_1"/>
<dbReference type="InParanoid" id="P97300"/>
<dbReference type="OMA" id="GRYECNA"/>
<dbReference type="OrthoDB" id="5970915at2759"/>
<dbReference type="PhylomeDB" id="P97300"/>
<dbReference type="TreeFam" id="TF326759"/>
<dbReference type="BioGRID-ORCS" id="20320">
    <property type="hits" value="0 hits in 78 CRISPR screens"/>
</dbReference>
<dbReference type="CD-CODE" id="CE726F99">
    <property type="entry name" value="Postsynaptic density"/>
</dbReference>
<dbReference type="ChiTaRS" id="Nptn">
    <property type="organism name" value="mouse"/>
</dbReference>
<dbReference type="PRO" id="PR:P97300"/>
<dbReference type="Proteomes" id="UP000000589">
    <property type="component" value="Chromosome 9"/>
</dbReference>
<dbReference type="RNAct" id="P97300">
    <property type="molecule type" value="protein"/>
</dbReference>
<dbReference type="Bgee" id="ENSMUSG00000032336">
    <property type="expression patterns" value="Expressed in caudate-putamen and 263 other cell types or tissues"/>
</dbReference>
<dbReference type="ExpressionAtlas" id="P97300">
    <property type="expression patterns" value="baseline and differential"/>
</dbReference>
<dbReference type="GO" id="GO:0030425">
    <property type="term" value="C:dendrite"/>
    <property type="evidence" value="ECO:0000314"/>
    <property type="project" value="MGI"/>
</dbReference>
<dbReference type="GO" id="GO:0001772">
    <property type="term" value="C:immunological synapse"/>
    <property type="evidence" value="ECO:0000314"/>
    <property type="project" value="UniProtKB"/>
</dbReference>
<dbReference type="GO" id="GO:0014069">
    <property type="term" value="C:postsynaptic density"/>
    <property type="evidence" value="ECO:0007669"/>
    <property type="project" value="UniProtKB-SubCell"/>
</dbReference>
<dbReference type="GO" id="GO:0042734">
    <property type="term" value="C:presynaptic membrane"/>
    <property type="evidence" value="ECO:0000250"/>
    <property type="project" value="HGNC-UCL"/>
</dbReference>
<dbReference type="GO" id="GO:0050839">
    <property type="term" value="F:cell adhesion molecule binding"/>
    <property type="evidence" value="ECO:0000250"/>
    <property type="project" value="HGNC-UCL"/>
</dbReference>
<dbReference type="GO" id="GO:0005105">
    <property type="term" value="F:type 1 fibroblast growth factor receptor binding"/>
    <property type="evidence" value="ECO:0000250"/>
    <property type="project" value="UniProtKB"/>
</dbReference>
<dbReference type="GO" id="GO:1904861">
    <property type="term" value="P:excitatory synapse assembly"/>
    <property type="evidence" value="ECO:0000315"/>
    <property type="project" value="MGI"/>
</dbReference>
<dbReference type="GO" id="GO:0007156">
    <property type="term" value="P:homophilic cell adhesion via plasma membrane adhesion molecules"/>
    <property type="evidence" value="ECO:0000250"/>
    <property type="project" value="HGNC-UCL"/>
</dbReference>
<dbReference type="GO" id="GO:0006874">
    <property type="term" value="P:intracellular calcium ion homeostasis"/>
    <property type="evidence" value="ECO:0000315"/>
    <property type="project" value="UniProtKB"/>
</dbReference>
<dbReference type="GO" id="GO:0060291">
    <property type="term" value="P:long-term synaptic potentiation"/>
    <property type="evidence" value="ECO:0000250"/>
    <property type="project" value="UniProtKB"/>
</dbReference>
<dbReference type="GO" id="GO:0050804">
    <property type="term" value="P:modulation of chemical synaptic transmission"/>
    <property type="evidence" value="ECO:0000315"/>
    <property type="project" value="MGI"/>
</dbReference>
<dbReference type="GO" id="GO:0001818">
    <property type="term" value="P:negative regulation of cytokine production"/>
    <property type="evidence" value="ECO:0000315"/>
    <property type="project" value="UniProtKB"/>
</dbReference>
<dbReference type="GO" id="GO:0007204">
    <property type="term" value="P:positive regulation of cytosolic calcium ion concentration"/>
    <property type="evidence" value="ECO:0000250"/>
    <property type="project" value="UniProtKB"/>
</dbReference>
<dbReference type="GO" id="GO:0045743">
    <property type="term" value="P:positive regulation of fibroblast growth factor receptor signaling pathway"/>
    <property type="evidence" value="ECO:0000250"/>
    <property type="project" value="UniProtKB"/>
</dbReference>
<dbReference type="GO" id="GO:0048170">
    <property type="term" value="P:positive regulation of long-term neuronal synaptic plasticity"/>
    <property type="evidence" value="ECO:0000250"/>
    <property type="project" value="HGNC-UCL"/>
</dbReference>
<dbReference type="GO" id="GO:0010976">
    <property type="term" value="P:positive regulation of neuron projection development"/>
    <property type="evidence" value="ECO:0000250"/>
    <property type="project" value="UniProtKB"/>
</dbReference>
<dbReference type="GO" id="GO:0001934">
    <property type="term" value="P:positive regulation of protein phosphorylation"/>
    <property type="evidence" value="ECO:0000250"/>
    <property type="project" value="UniProtKB"/>
</dbReference>
<dbReference type="GO" id="GO:1902683">
    <property type="term" value="P:regulation of receptor localization to synapse"/>
    <property type="evidence" value="ECO:0000315"/>
    <property type="project" value="MGI"/>
</dbReference>
<dbReference type="GO" id="GO:0050808">
    <property type="term" value="P:synapse organization"/>
    <property type="evidence" value="ECO:0000315"/>
    <property type="project" value="MGI"/>
</dbReference>
<dbReference type="FunFam" id="2.60.40.10:FF:000385">
    <property type="entry name" value="Neuroplastin a"/>
    <property type="match status" value="1"/>
</dbReference>
<dbReference type="FunFam" id="2.60.40.10:FF:000291">
    <property type="entry name" value="Neuroplastin b"/>
    <property type="match status" value="1"/>
</dbReference>
<dbReference type="FunFam" id="2.60.40.10:FF:000387">
    <property type="entry name" value="Neuroplastin b"/>
    <property type="match status" value="1"/>
</dbReference>
<dbReference type="Gene3D" id="2.60.40.10">
    <property type="entry name" value="Immunoglobulins"/>
    <property type="match status" value="3"/>
</dbReference>
<dbReference type="InterPro" id="IPR007110">
    <property type="entry name" value="Ig-like_dom"/>
</dbReference>
<dbReference type="InterPro" id="IPR036179">
    <property type="entry name" value="Ig-like_dom_sf"/>
</dbReference>
<dbReference type="InterPro" id="IPR013783">
    <property type="entry name" value="Ig-like_fold"/>
</dbReference>
<dbReference type="InterPro" id="IPR013098">
    <property type="entry name" value="Ig_I-set"/>
</dbReference>
<dbReference type="InterPro" id="IPR003599">
    <property type="entry name" value="Ig_sub"/>
</dbReference>
<dbReference type="InterPro" id="IPR003598">
    <property type="entry name" value="Ig_sub2"/>
</dbReference>
<dbReference type="PANTHER" id="PTHR10075">
    <property type="entry name" value="BASIGIN RELATED"/>
    <property type="match status" value="1"/>
</dbReference>
<dbReference type="PANTHER" id="PTHR10075:SF108">
    <property type="entry name" value="NEUROPLASTIN"/>
    <property type="match status" value="1"/>
</dbReference>
<dbReference type="Pfam" id="PF07679">
    <property type="entry name" value="I-set"/>
    <property type="match status" value="1"/>
</dbReference>
<dbReference type="Pfam" id="PF13927">
    <property type="entry name" value="Ig_3"/>
    <property type="match status" value="2"/>
</dbReference>
<dbReference type="PIRSF" id="PIRSF000615">
    <property type="entry name" value="TyrPK_CSF1-R"/>
    <property type="match status" value="1"/>
</dbReference>
<dbReference type="SMART" id="SM00409">
    <property type="entry name" value="IG"/>
    <property type="match status" value="3"/>
</dbReference>
<dbReference type="SMART" id="SM00408">
    <property type="entry name" value="IGc2"/>
    <property type="match status" value="2"/>
</dbReference>
<dbReference type="SUPFAM" id="SSF48726">
    <property type="entry name" value="Immunoglobulin"/>
    <property type="match status" value="3"/>
</dbReference>
<dbReference type="PROSITE" id="PS50835">
    <property type="entry name" value="IG_LIKE"/>
    <property type="match status" value="3"/>
</dbReference>
<sequence>MSGSSLPGALALSLLLVSGSLLPGPGAAQNAGFVKSPMSETKLTGDAFELYCDVVGSPTPEIQWWYAEVNRAESFRQLWDGARKRRVTVNTAYGSNGVSVLRITRLTLEDSGTYECRASNDPKRNDLRQNPSITWIRAQATISVLQKPRIVTSEEVIIRESLLPVTLQCNLTSSSHTLMYSYWTRNGVELTATRKNASNMEYRINKPRAEDSGEYHCVYHFVSAPKANATIEVKAAPDITGHKRSENKNEGQDAMMYCKSVGYPHPEWIWRKKENGVFEEISNSSGRFFITNKENYTELSIVNLQITEDPGEYECNATNSIGSASVSTVLRVRSHLAPLWPFLGILAEIIILVVIIVVYEKRKRPDEVPDDDEPAGPMKTNSTNNHKDKNLRQRNTN</sequence>